<protein>
    <recommendedName>
        <fullName evidence="1">Large ribosomal subunit protein uL18</fullName>
    </recommendedName>
    <alternativeName>
        <fullName evidence="2">50S ribosomal protein L18</fullName>
    </alternativeName>
</protein>
<organism>
    <name type="scientific">Onion yellows phytoplasma (strain OY-M)</name>
    <dbReference type="NCBI Taxonomy" id="262768"/>
    <lineage>
        <taxon>Bacteria</taxon>
        <taxon>Bacillati</taxon>
        <taxon>Mycoplasmatota</taxon>
        <taxon>Mollicutes</taxon>
        <taxon>Acholeplasmatales</taxon>
        <taxon>Acholeplasmataceae</taxon>
        <taxon>Candidatus Phytoplasma</taxon>
        <taxon>16SrI (Aster yellows group)</taxon>
    </lineage>
</organism>
<comment type="function">
    <text evidence="1">This is one of the proteins that bind and probably mediate the attachment of the 5S RNA into the large ribosomal subunit, where it forms part of the central protuberance.</text>
</comment>
<comment type="subunit">
    <text evidence="1">Part of the 50S ribosomal subunit; part of the 5S rRNA/L5/L18/L25 subcomplex. Contacts the 5S and 23S rRNAs.</text>
</comment>
<comment type="similarity">
    <text evidence="1">Belongs to the universal ribosomal protein uL18 family.</text>
</comment>
<reference key="1">
    <citation type="journal article" date="2004" name="Nat. Genet.">
        <title>Reductive evolution suggested from the complete genome sequence of a plant-pathogenic phytoplasma.</title>
        <authorList>
            <person name="Oshima K."/>
            <person name="Kakizawa S."/>
            <person name="Nishigawa H."/>
            <person name="Jung H.-Y."/>
            <person name="Wei W."/>
            <person name="Suzuki S."/>
            <person name="Arashida R."/>
            <person name="Nakata D."/>
            <person name="Miyata S."/>
            <person name="Ugaki M."/>
            <person name="Namba S."/>
        </authorList>
    </citation>
    <scope>NUCLEOTIDE SEQUENCE [LARGE SCALE GENOMIC DNA]</scope>
    <source>
        <strain>OY-M</strain>
    </source>
</reference>
<feature type="chain" id="PRO_0000131312" description="Large ribosomal subunit protein uL18">
    <location>
        <begin position="1"/>
        <end position="117"/>
    </location>
</feature>
<keyword id="KW-0687">Ribonucleoprotein</keyword>
<keyword id="KW-0689">Ribosomal protein</keyword>
<keyword id="KW-0694">RNA-binding</keyword>
<keyword id="KW-0699">rRNA-binding</keyword>
<accession>Q6YR06</accession>
<proteinExistence type="inferred from homology"/>
<name>RL18_ONYPE</name>
<gene>
    <name evidence="1" type="primary">rplR</name>
    <name type="ordered locus">PAM_216</name>
</gene>
<sequence length="117" mass="12992">MITKQSSNVLRKKRHLRLRKIVSGTSQRPRLNVFRSNKFLYVQIIDDTQQTTLCSANSKESNVLGSNIKAAEAVGALIAKKALAQGIKNVVFDRSGYLYHGKIKALADACRKSGLQF</sequence>
<evidence type="ECO:0000255" key="1">
    <source>
        <dbReference type="HAMAP-Rule" id="MF_01337"/>
    </source>
</evidence>
<evidence type="ECO:0000305" key="2"/>
<dbReference type="EMBL" id="AP006628">
    <property type="protein sequence ID" value="BAD04301.1"/>
    <property type="molecule type" value="Genomic_DNA"/>
</dbReference>
<dbReference type="SMR" id="Q6YR06"/>
<dbReference type="STRING" id="262768.PAM_216"/>
<dbReference type="KEGG" id="poy:PAM_216"/>
<dbReference type="eggNOG" id="COG0256">
    <property type="taxonomic scope" value="Bacteria"/>
</dbReference>
<dbReference type="HOGENOM" id="CLU_098841_0_1_14"/>
<dbReference type="BioCyc" id="OYEL262768:G1G26-262-MONOMER"/>
<dbReference type="Proteomes" id="UP000002523">
    <property type="component" value="Chromosome"/>
</dbReference>
<dbReference type="GO" id="GO:0022625">
    <property type="term" value="C:cytosolic large ribosomal subunit"/>
    <property type="evidence" value="ECO:0007669"/>
    <property type="project" value="TreeGrafter"/>
</dbReference>
<dbReference type="GO" id="GO:0008097">
    <property type="term" value="F:5S rRNA binding"/>
    <property type="evidence" value="ECO:0007669"/>
    <property type="project" value="TreeGrafter"/>
</dbReference>
<dbReference type="GO" id="GO:0003735">
    <property type="term" value="F:structural constituent of ribosome"/>
    <property type="evidence" value="ECO:0007669"/>
    <property type="project" value="InterPro"/>
</dbReference>
<dbReference type="GO" id="GO:0006412">
    <property type="term" value="P:translation"/>
    <property type="evidence" value="ECO:0007669"/>
    <property type="project" value="UniProtKB-UniRule"/>
</dbReference>
<dbReference type="CDD" id="cd00432">
    <property type="entry name" value="Ribosomal_L18_L5e"/>
    <property type="match status" value="1"/>
</dbReference>
<dbReference type="FunFam" id="3.30.420.100:FF:000001">
    <property type="entry name" value="50S ribosomal protein L18"/>
    <property type="match status" value="1"/>
</dbReference>
<dbReference type="Gene3D" id="3.30.420.100">
    <property type="match status" value="1"/>
</dbReference>
<dbReference type="HAMAP" id="MF_01337_B">
    <property type="entry name" value="Ribosomal_uL18_B"/>
    <property type="match status" value="1"/>
</dbReference>
<dbReference type="InterPro" id="IPR004389">
    <property type="entry name" value="Ribosomal_uL18_bac-type"/>
</dbReference>
<dbReference type="InterPro" id="IPR005484">
    <property type="entry name" value="Ribosomal_uL18_bac/euk"/>
</dbReference>
<dbReference type="NCBIfam" id="TIGR00060">
    <property type="entry name" value="L18_bact"/>
    <property type="match status" value="1"/>
</dbReference>
<dbReference type="PANTHER" id="PTHR12899">
    <property type="entry name" value="39S RIBOSOMAL PROTEIN L18, MITOCHONDRIAL"/>
    <property type="match status" value="1"/>
</dbReference>
<dbReference type="PANTHER" id="PTHR12899:SF3">
    <property type="entry name" value="LARGE RIBOSOMAL SUBUNIT PROTEIN UL18M"/>
    <property type="match status" value="1"/>
</dbReference>
<dbReference type="Pfam" id="PF00861">
    <property type="entry name" value="Ribosomal_L18p"/>
    <property type="match status" value="1"/>
</dbReference>
<dbReference type="SUPFAM" id="SSF53137">
    <property type="entry name" value="Translational machinery components"/>
    <property type="match status" value="1"/>
</dbReference>